<gene>
    <name type="primary">ybhG</name>
    <name type="ordered locus">STM0818</name>
</gene>
<accession>Q8ZQP0</accession>
<protein>
    <recommendedName>
        <fullName>UPF0194 membrane protein YbhG</fullName>
    </recommendedName>
</protein>
<keyword id="KW-0175">Coiled coil</keyword>
<keyword id="KW-0574">Periplasm</keyword>
<keyword id="KW-1185">Reference proteome</keyword>
<keyword id="KW-0732">Signal</keyword>
<comment type="subcellular location">
    <subcellularLocation>
        <location evidence="2">Periplasm</location>
    </subcellularLocation>
</comment>
<comment type="similarity">
    <text evidence="2">Belongs to the UPF0194 family.</text>
</comment>
<sequence>MKKPVVIGLAIAAIVAVIAGGTWWYQSRQDDGLTLYGNVDIRTVNISFRVGGRLASLNVDEGDTIKAGQVLGELDHAPYENALMQAKAGVSVAQAQYDLMLAGYRDEEIAQAAAAVRQAQAAYDYAQNFYNRQQGLWKSRTISANDLENARSSRDQAQATLKSAQDKLSQYRTGNREQDIAQAKASLEQAKAQLAQAQLDLQDTTLIAPANGTLLTRAVEPGSMLNAGSTVLTLSLTRPVWVRAYVDERNLSQTQPGRDILLYTDGRPDKPYHGKIGFVSPTAEFTPKTVETPDLRTDLVYRLRIIVTDADDALRQGMPVTVKFNDEARHE</sequence>
<evidence type="ECO:0000255" key="1"/>
<evidence type="ECO:0000305" key="2"/>
<reference key="1">
    <citation type="journal article" date="2001" name="Nature">
        <title>Complete genome sequence of Salmonella enterica serovar Typhimurium LT2.</title>
        <authorList>
            <person name="McClelland M."/>
            <person name="Sanderson K.E."/>
            <person name="Spieth J."/>
            <person name="Clifton S.W."/>
            <person name="Latreille P."/>
            <person name="Courtney L."/>
            <person name="Porwollik S."/>
            <person name="Ali J."/>
            <person name="Dante M."/>
            <person name="Du F."/>
            <person name="Hou S."/>
            <person name="Layman D."/>
            <person name="Leonard S."/>
            <person name="Nguyen C."/>
            <person name="Scott K."/>
            <person name="Holmes A."/>
            <person name="Grewal N."/>
            <person name="Mulvaney E."/>
            <person name="Ryan E."/>
            <person name="Sun H."/>
            <person name="Florea L."/>
            <person name="Miller W."/>
            <person name="Stoneking T."/>
            <person name="Nhan M."/>
            <person name="Waterston R."/>
            <person name="Wilson R.K."/>
        </authorList>
    </citation>
    <scope>NUCLEOTIDE SEQUENCE [LARGE SCALE GENOMIC DNA]</scope>
    <source>
        <strain>LT2 / SGSC1412 / ATCC 700720</strain>
    </source>
</reference>
<proteinExistence type="inferred from homology"/>
<organism>
    <name type="scientific">Salmonella typhimurium (strain LT2 / SGSC1412 / ATCC 700720)</name>
    <dbReference type="NCBI Taxonomy" id="99287"/>
    <lineage>
        <taxon>Bacteria</taxon>
        <taxon>Pseudomonadati</taxon>
        <taxon>Pseudomonadota</taxon>
        <taxon>Gammaproteobacteria</taxon>
        <taxon>Enterobacterales</taxon>
        <taxon>Enterobacteriaceae</taxon>
        <taxon>Salmonella</taxon>
    </lineage>
</organism>
<feature type="signal peptide" evidence="1">
    <location>
        <begin position="1"/>
        <end position="19"/>
    </location>
</feature>
<feature type="chain" id="PRO_0000088751" description="UPF0194 membrane protein YbhG">
    <location>
        <begin position="20"/>
        <end position="331"/>
    </location>
</feature>
<feature type="coiled-coil region" evidence="1">
    <location>
        <begin position="140"/>
        <end position="209"/>
    </location>
</feature>
<name>YBHG_SALTY</name>
<dbReference type="EMBL" id="AE006468">
    <property type="protein sequence ID" value="AAL19755.1"/>
    <property type="molecule type" value="Genomic_DNA"/>
</dbReference>
<dbReference type="RefSeq" id="NP_459796.1">
    <property type="nucleotide sequence ID" value="NC_003197.2"/>
</dbReference>
<dbReference type="SMR" id="Q8ZQP0"/>
<dbReference type="STRING" id="99287.STM0818"/>
<dbReference type="PaxDb" id="99287-STM0818"/>
<dbReference type="GeneID" id="1252338"/>
<dbReference type="KEGG" id="stm:STM0818"/>
<dbReference type="PATRIC" id="fig|99287.12.peg.852"/>
<dbReference type="HOGENOM" id="CLU_018816_6_3_6"/>
<dbReference type="OMA" id="MYLTDID"/>
<dbReference type="PhylomeDB" id="Q8ZQP0"/>
<dbReference type="BioCyc" id="SENT99287:STM0818-MONOMER"/>
<dbReference type="Proteomes" id="UP000001014">
    <property type="component" value="Chromosome"/>
</dbReference>
<dbReference type="GO" id="GO:0042597">
    <property type="term" value="C:periplasmic space"/>
    <property type="evidence" value="ECO:0007669"/>
    <property type="project" value="UniProtKB-SubCell"/>
</dbReference>
<dbReference type="GO" id="GO:0046677">
    <property type="term" value="P:response to antibiotic"/>
    <property type="evidence" value="ECO:0000318"/>
    <property type="project" value="GO_Central"/>
</dbReference>
<dbReference type="FunFam" id="1.10.287.470:FF:000004">
    <property type="entry name" value="UPF0194 membrane protein YbhG"/>
    <property type="match status" value="1"/>
</dbReference>
<dbReference type="FunFam" id="2.40.50.100:FF:000025">
    <property type="entry name" value="UPF0194 membrane protein YbhG"/>
    <property type="match status" value="1"/>
</dbReference>
<dbReference type="Gene3D" id="2.40.30.170">
    <property type="match status" value="1"/>
</dbReference>
<dbReference type="Gene3D" id="2.40.50.100">
    <property type="match status" value="2"/>
</dbReference>
<dbReference type="Gene3D" id="1.10.287.470">
    <property type="entry name" value="Helix hairpin bin"/>
    <property type="match status" value="1"/>
</dbReference>
<dbReference type="HAMAP" id="MF_01304">
    <property type="entry name" value="UPF0194"/>
    <property type="match status" value="1"/>
</dbReference>
<dbReference type="InterPro" id="IPR032317">
    <property type="entry name" value="CusB_D23"/>
</dbReference>
<dbReference type="InterPro" id="IPR022936">
    <property type="entry name" value="UPF0194_membrane_YbhG"/>
</dbReference>
<dbReference type="InterPro" id="IPR050465">
    <property type="entry name" value="UPF0194_transport"/>
</dbReference>
<dbReference type="NCBIfam" id="NF002939">
    <property type="entry name" value="PRK03598.1"/>
    <property type="match status" value="1"/>
</dbReference>
<dbReference type="PANTHER" id="PTHR32347">
    <property type="entry name" value="EFFLUX SYSTEM COMPONENT YKNX-RELATED"/>
    <property type="match status" value="1"/>
</dbReference>
<dbReference type="PANTHER" id="PTHR32347:SF29">
    <property type="entry name" value="UPF0194 MEMBRANE PROTEIN YBHG"/>
    <property type="match status" value="1"/>
</dbReference>
<dbReference type="Pfam" id="PF16576">
    <property type="entry name" value="HlyD_D23"/>
    <property type="match status" value="1"/>
</dbReference>
<dbReference type="SUPFAM" id="SSF111369">
    <property type="entry name" value="HlyD-like secretion proteins"/>
    <property type="match status" value="3"/>
</dbReference>